<proteinExistence type="inferred from homology"/>
<feature type="chain" id="PRO_0000114355" description="Cell division protein FtsZ">
    <location>
        <begin position="1"/>
        <end position="421"/>
    </location>
</feature>
<feature type="binding site" evidence="1">
    <location>
        <begin position="26"/>
        <end position="30"/>
    </location>
    <ligand>
        <name>GTP</name>
        <dbReference type="ChEBI" id="CHEBI:37565"/>
    </ligand>
</feature>
<feature type="binding site" evidence="1">
    <location>
        <begin position="132"/>
        <end position="134"/>
    </location>
    <ligand>
        <name>GTP</name>
        <dbReference type="ChEBI" id="CHEBI:37565"/>
    </ligand>
</feature>
<feature type="binding site" evidence="1">
    <location>
        <position position="163"/>
    </location>
    <ligand>
        <name>GTP</name>
        <dbReference type="ChEBI" id="CHEBI:37565"/>
    </ligand>
</feature>
<feature type="binding site" evidence="1">
    <location>
        <position position="167"/>
    </location>
    <ligand>
        <name>GTP</name>
        <dbReference type="ChEBI" id="CHEBI:37565"/>
    </ligand>
</feature>
<feature type="binding site" evidence="1">
    <location>
        <position position="211"/>
    </location>
    <ligand>
        <name>GTP</name>
        <dbReference type="ChEBI" id="CHEBI:37565"/>
    </ligand>
</feature>
<evidence type="ECO:0000255" key="1">
    <source>
        <dbReference type="HAMAP-Rule" id="MF_00909"/>
    </source>
</evidence>
<protein>
    <recommendedName>
        <fullName evidence="1">Cell division protein FtsZ</fullName>
    </recommendedName>
</protein>
<reference key="1">
    <citation type="journal article" date="1995" name="Science">
        <title>Whole-genome random sequencing and assembly of Haemophilus influenzae Rd.</title>
        <authorList>
            <person name="Fleischmann R.D."/>
            <person name="Adams M.D."/>
            <person name="White O."/>
            <person name="Clayton R.A."/>
            <person name="Kirkness E.F."/>
            <person name="Kerlavage A.R."/>
            <person name="Bult C.J."/>
            <person name="Tomb J.-F."/>
            <person name="Dougherty B.A."/>
            <person name="Merrick J.M."/>
            <person name="McKenney K."/>
            <person name="Sutton G.G."/>
            <person name="FitzHugh W."/>
            <person name="Fields C.A."/>
            <person name="Gocayne J.D."/>
            <person name="Scott J.D."/>
            <person name="Shirley R."/>
            <person name="Liu L.-I."/>
            <person name="Glodek A."/>
            <person name="Kelley J.M."/>
            <person name="Weidman J.F."/>
            <person name="Phillips C.A."/>
            <person name="Spriggs T."/>
            <person name="Hedblom E."/>
            <person name="Cotton M.D."/>
            <person name="Utterback T.R."/>
            <person name="Hanna M.C."/>
            <person name="Nguyen D.T."/>
            <person name="Saudek D.M."/>
            <person name="Brandon R.C."/>
            <person name="Fine L.D."/>
            <person name="Fritchman J.L."/>
            <person name="Fuhrmann J.L."/>
            <person name="Geoghagen N.S.M."/>
            <person name="Gnehm C.L."/>
            <person name="McDonald L.A."/>
            <person name="Small K.V."/>
            <person name="Fraser C.M."/>
            <person name="Smith H.O."/>
            <person name="Venter J.C."/>
        </authorList>
    </citation>
    <scope>NUCLEOTIDE SEQUENCE [LARGE SCALE GENOMIC DNA]</scope>
    <source>
        <strain>ATCC 51907 / DSM 11121 / KW20 / Rd</strain>
    </source>
</reference>
<keyword id="KW-0131">Cell cycle</keyword>
<keyword id="KW-0132">Cell division</keyword>
<keyword id="KW-0963">Cytoplasm</keyword>
<keyword id="KW-0342">GTP-binding</keyword>
<keyword id="KW-0547">Nucleotide-binding</keyword>
<keyword id="KW-1185">Reference proteome</keyword>
<keyword id="KW-0717">Septation</keyword>
<name>FTSZ_HAEIN</name>
<dbReference type="EMBL" id="L42023">
    <property type="protein sequence ID" value="AAC22798.1"/>
    <property type="molecule type" value="Genomic_DNA"/>
</dbReference>
<dbReference type="PIR" id="I64185">
    <property type="entry name" value="I64185"/>
</dbReference>
<dbReference type="RefSeq" id="NP_439301.1">
    <property type="nucleotide sequence ID" value="NC_000907.1"/>
</dbReference>
<dbReference type="SMR" id="P45069"/>
<dbReference type="STRING" id="71421.HI_1143"/>
<dbReference type="EnsemblBacteria" id="AAC22798">
    <property type="protein sequence ID" value="AAC22798"/>
    <property type="gene ID" value="HI_1143"/>
</dbReference>
<dbReference type="KEGG" id="hin:HI_1143"/>
<dbReference type="PATRIC" id="fig|71421.8.peg.1193"/>
<dbReference type="eggNOG" id="COG0206">
    <property type="taxonomic scope" value="Bacteria"/>
</dbReference>
<dbReference type="HOGENOM" id="CLU_024865_0_5_6"/>
<dbReference type="OrthoDB" id="9813375at2"/>
<dbReference type="PhylomeDB" id="P45069"/>
<dbReference type="BioCyc" id="HINF71421:G1GJ1-1176-MONOMER"/>
<dbReference type="Proteomes" id="UP000000579">
    <property type="component" value="Chromosome"/>
</dbReference>
<dbReference type="GO" id="GO:0032153">
    <property type="term" value="C:cell division site"/>
    <property type="evidence" value="ECO:0000318"/>
    <property type="project" value="GO_Central"/>
</dbReference>
<dbReference type="GO" id="GO:0005737">
    <property type="term" value="C:cytoplasm"/>
    <property type="evidence" value="ECO:0000318"/>
    <property type="project" value="GO_Central"/>
</dbReference>
<dbReference type="GO" id="GO:0005525">
    <property type="term" value="F:GTP binding"/>
    <property type="evidence" value="ECO:0000318"/>
    <property type="project" value="GO_Central"/>
</dbReference>
<dbReference type="GO" id="GO:0003924">
    <property type="term" value="F:GTPase activity"/>
    <property type="evidence" value="ECO:0000318"/>
    <property type="project" value="GO_Central"/>
</dbReference>
<dbReference type="GO" id="GO:0051301">
    <property type="term" value="P:cell division"/>
    <property type="evidence" value="ECO:0000318"/>
    <property type="project" value="GO_Central"/>
</dbReference>
<dbReference type="GO" id="GO:0000917">
    <property type="term" value="P:division septum assembly"/>
    <property type="evidence" value="ECO:0007669"/>
    <property type="project" value="UniProtKB-KW"/>
</dbReference>
<dbReference type="GO" id="GO:0043093">
    <property type="term" value="P:FtsZ-dependent cytokinesis"/>
    <property type="evidence" value="ECO:0007669"/>
    <property type="project" value="UniProtKB-UniRule"/>
</dbReference>
<dbReference type="GO" id="GO:0051258">
    <property type="term" value="P:protein polymerization"/>
    <property type="evidence" value="ECO:0007669"/>
    <property type="project" value="UniProtKB-UniRule"/>
</dbReference>
<dbReference type="CDD" id="cd02201">
    <property type="entry name" value="FtsZ_type1"/>
    <property type="match status" value="1"/>
</dbReference>
<dbReference type="FunFam" id="3.40.50.1440:FF:000023">
    <property type="entry name" value="Cell division protein FtsZ"/>
    <property type="match status" value="1"/>
</dbReference>
<dbReference type="Gene3D" id="3.40.50.1440">
    <property type="entry name" value="Tubulin/FtsZ, GTPase domain"/>
    <property type="match status" value="1"/>
</dbReference>
<dbReference type="HAMAP" id="MF_00909">
    <property type="entry name" value="FtsZ"/>
    <property type="match status" value="1"/>
</dbReference>
<dbReference type="InterPro" id="IPR000158">
    <property type="entry name" value="Cell_div_FtsZ"/>
</dbReference>
<dbReference type="InterPro" id="IPR020805">
    <property type="entry name" value="Cell_div_FtsZ_CS"/>
</dbReference>
<dbReference type="InterPro" id="IPR045061">
    <property type="entry name" value="FtsZ/CetZ"/>
</dbReference>
<dbReference type="InterPro" id="IPR024757">
    <property type="entry name" value="FtsZ_C"/>
</dbReference>
<dbReference type="InterPro" id="IPR008280">
    <property type="entry name" value="Tub_FtsZ_C"/>
</dbReference>
<dbReference type="InterPro" id="IPR018316">
    <property type="entry name" value="Tubulin/FtsZ_2-layer-sand-dom"/>
</dbReference>
<dbReference type="InterPro" id="IPR036525">
    <property type="entry name" value="Tubulin/FtsZ_GTPase_sf"/>
</dbReference>
<dbReference type="InterPro" id="IPR003008">
    <property type="entry name" value="Tubulin_FtsZ_GTPase"/>
</dbReference>
<dbReference type="NCBIfam" id="TIGR00065">
    <property type="entry name" value="ftsZ"/>
    <property type="match status" value="1"/>
</dbReference>
<dbReference type="PANTHER" id="PTHR30314">
    <property type="entry name" value="CELL DIVISION PROTEIN FTSZ-RELATED"/>
    <property type="match status" value="1"/>
</dbReference>
<dbReference type="PANTHER" id="PTHR30314:SF3">
    <property type="entry name" value="MITOCHONDRIAL DIVISION PROTEIN FSZA"/>
    <property type="match status" value="1"/>
</dbReference>
<dbReference type="Pfam" id="PF12327">
    <property type="entry name" value="FtsZ_C"/>
    <property type="match status" value="1"/>
</dbReference>
<dbReference type="Pfam" id="PF00091">
    <property type="entry name" value="Tubulin"/>
    <property type="match status" value="1"/>
</dbReference>
<dbReference type="PRINTS" id="PR00423">
    <property type="entry name" value="CELLDVISFTSZ"/>
</dbReference>
<dbReference type="SMART" id="SM00864">
    <property type="entry name" value="Tubulin"/>
    <property type="match status" value="1"/>
</dbReference>
<dbReference type="SMART" id="SM00865">
    <property type="entry name" value="Tubulin_C"/>
    <property type="match status" value="1"/>
</dbReference>
<dbReference type="SUPFAM" id="SSF55307">
    <property type="entry name" value="Tubulin C-terminal domain-like"/>
    <property type="match status" value="1"/>
</dbReference>
<dbReference type="SUPFAM" id="SSF52490">
    <property type="entry name" value="Tubulin nucleotide-binding domain-like"/>
    <property type="match status" value="1"/>
</dbReference>
<dbReference type="PROSITE" id="PS01134">
    <property type="entry name" value="FTSZ_1"/>
    <property type="match status" value="1"/>
</dbReference>
<dbReference type="PROSITE" id="PS01135">
    <property type="entry name" value="FTSZ_2"/>
    <property type="match status" value="1"/>
</dbReference>
<accession>P45069</accession>
<gene>
    <name evidence="1" type="primary">ftsZ</name>
    <name type="ordered locus">HI_1143</name>
</gene>
<sequence>MLYPEYPEYDNFNESGALIKVVGVGGGGGNAVNHMVMNMVKQEMGGTFVGESSLTSEEHGRIVFYAVNTDAQALRKSQVQQTVQIGGETTKGLGAGANPNIGRKAAEDDQDEIRKMLEGADMVFIAAGMGGGTGTGAAPVVAKIAKELGILTVAVVTKPFTFEGKKRMQFAELGIKDLSQYVDSMIIIPNQQIQKVLPKNAKLIDAFAAANDVLRNSVMGISDMITSPGLINVDFADVRTVMSVQGQAMIGFGSAVGEPGAGRAEEAARLAVRNDLLEKIDLSNAQGILVNITAGMDLVFEEFNIIGETIGSFASEEATVVVGTSLVPEMSDEIRVTIVATGLGEIAGNEPIQVVRQGLSTQNIEGEGRVNIVPELHRRESVEVSRTASEEYQRPLDKPITDRLEAFKKNNFFNPAQREEN</sequence>
<organism>
    <name type="scientific">Haemophilus influenzae (strain ATCC 51907 / DSM 11121 / KW20 / Rd)</name>
    <dbReference type="NCBI Taxonomy" id="71421"/>
    <lineage>
        <taxon>Bacteria</taxon>
        <taxon>Pseudomonadati</taxon>
        <taxon>Pseudomonadota</taxon>
        <taxon>Gammaproteobacteria</taxon>
        <taxon>Pasteurellales</taxon>
        <taxon>Pasteurellaceae</taxon>
        <taxon>Haemophilus</taxon>
    </lineage>
</organism>
<comment type="function">
    <text evidence="1">Essential cell division protein that forms a contractile ring structure (Z ring) at the future cell division site. The regulation of the ring assembly controls the timing and the location of cell division. One of the functions of the FtsZ ring is to recruit other cell division proteins to the septum to produce a new cell wall between the dividing cells. Binds GTP and shows GTPase activity.</text>
</comment>
<comment type="subunit">
    <text evidence="1">Homodimer. Polymerizes to form a dynamic ring structure in a strictly GTP-dependent manner. Interacts directly with several other division proteins.</text>
</comment>
<comment type="subcellular location">
    <subcellularLocation>
        <location evidence="1">Cytoplasm</location>
    </subcellularLocation>
    <text evidence="1">Assembles at midcell at the inner surface of the cytoplasmic membrane.</text>
</comment>
<comment type="similarity">
    <text evidence="1">Belongs to the FtsZ family.</text>
</comment>